<feature type="chain" id="PRO_0000102940" description="SsrA-binding protein">
    <location>
        <begin position="1"/>
        <end position="159"/>
    </location>
</feature>
<keyword id="KW-0963">Cytoplasm</keyword>
<keyword id="KW-1185">Reference proteome</keyword>
<keyword id="KW-0694">RNA-binding</keyword>
<name>SSRP_COXBU</name>
<proteinExistence type="inferred from homology"/>
<gene>
    <name evidence="1" type="primary">smpB</name>
    <name type="ordered locus">CBU_1305</name>
</gene>
<comment type="function">
    <text evidence="1">Required for rescue of stalled ribosomes mediated by trans-translation. Binds to transfer-messenger RNA (tmRNA), required for stable association of tmRNA with ribosomes. tmRNA and SmpB together mimic tRNA shape, replacing the anticodon stem-loop with SmpB. tmRNA is encoded by the ssrA gene; the 2 termini fold to resemble tRNA(Ala) and it encodes a 'tag peptide', a short internal open reading frame. During trans-translation Ala-aminoacylated tmRNA acts like a tRNA, entering the A-site of stalled ribosomes, displacing the stalled mRNA. The ribosome then switches to translate the ORF on the tmRNA; the nascent peptide is terminated with the 'tag peptide' encoded by the tmRNA and targeted for degradation. The ribosome is freed to recommence translation, which seems to be the essential function of trans-translation.</text>
</comment>
<comment type="subcellular location">
    <subcellularLocation>
        <location evidence="1">Cytoplasm</location>
    </subcellularLocation>
    <text evidence="1">The tmRNA-SmpB complex associates with stalled 70S ribosomes.</text>
</comment>
<comment type="similarity">
    <text evidence="1">Belongs to the SmpB family.</text>
</comment>
<evidence type="ECO:0000255" key="1">
    <source>
        <dbReference type="HAMAP-Rule" id="MF_00023"/>
    </source>
</evidence>
<organism>
    <name type="scientific">Coxiella burnetii (strain RSA 493 / Nine Mile phase I)</name>
    <dbReference type="NCBI Taxonomy" id="227377"/>
    <lineage>
        <taxon>Bacteria</taxon>
        <taxon>Pseudomonadati</taxon>
        <taxon>Pseudomonadota</taxon>
        <taxon>Gammaproteobacteria</taxon>
        <taxon>Legionellales</taxon>
        <taxon>Coxiellaceae</taxon>
        <taxon>Coxiella</taxon>
    </lineage>
</organism>
<dbReference type="EMBL" id="AE016828">
    <property type="protein sequence ID" value="AAO90811.1"/>
    <property type="molecule type" value="Genomic_DNA"/>
</dbReference>
<dbReference type="RefSeq" id="NP_820297.1">
    <property type="nucleotide sequence ID" value="NC_002971.4"/>
</dbReference>
<dbReference type="RefSeq" id="WP_010958138.1">
    <property type="nucleotide sequence ID" value="NC_002971.4"/>
</dbReference>
<dbReference type="SMR" id="Q83C29"/>
<dbReference type="STRING" id="227377.CBU_1305"/>
<dbReference type="EnsemblBacteria" id="AAO90811">
    <property type="protein sequence ID" value="AAO90811"/>
    <property type="gene ID" value="CBU_1305"/>
</dbReference>
<dbReference type="GeneID" id="1209210"/>
<dbReference type="KEGG" id="cbu:CBU_1305"/>
<dbReference type="PATRIC" id="fig|227377.7.peg.1299"/>
<dbReference type="eggNOG" id="COG0691">
    <property type="taxonomic scope" value="Bacteria"/>
</dbReference>
<dbReference type="HOGENOM" id="CLU_108953_3_0_6"/>
<dbReference type="OrthoDB" id="9805462at2"/>
<dbReference type="Proteomes" id="UP000002671">
    <property type="component" value="Chromosome"/>
</dbReference>
<dbReference type="GO" id="GO:0005829">
    <property type="term" value="C:cytosol"/>
    <property type="evidence" value="ECO:0000318"/>
    <property type="project" value="GO_Central"/>
</dbReference>
<dbReference type="GO" id="GO:0003723">
    <property type="term" value="F:RNA binding"/>
    <property type="evidence" value="ECO:0000318"/>
    <property type="project" value="GO_Central"/>
</dbReference>
<dbReference type="GO" id="GO:0070929">
    <property type="term" value="P:trans-translation"/>
    <property type="evidence" value="ECO:0007669"/>
    <property type="project" value="UniProtKB-UniRule"/>
</dbReference>
<dbReference type="CDD" id="cd09294">
    <property type="entry name" value="SmpB"/>
    <property type="match status" value="1"/>
</dbReference>
<dbReference type="Gene3D" id="2.40.280.10">
    <property type="match status" value="1"/>
</dbReference>
<dbReference type="HAMAP" id="MF_00023">
    <property type="entry name" value="SmpB"/>
    <property type="match status" value="1"/>
</dbReference>
<dbReference type="InterPro" id="IPR023620">
    <property type="entry name" value="SmpB"/>
</dbReference>
<dbReference type="InterPro" id="IPR000037">
    <property type="entry name" value="SsrA-bd_prot"/>
</dbReference>
<dbReference type="InterPro" id="IPR020081">
    <property type="entry name" value="SsrA-bd_prot_CS"/>
</dbReference>
<dbReference type="NCBIfam" id="NF003843">
    <property type="entry name" value="PRK05422.1"/>
    <property type="match status" value="1"/>
</dbReference>
<dbReference type="NCBIfam" id="TIGR00086">
    <property type="entry name" value="smpB"/>
    <property type="match status" value="1"/>
</dbReference>
<dbReference type="PANTHER" id="PTHR30308:SF2">
    <property type="entry name" value="SSRA-BINDING PROTEIN"/>
    <property type="match status" value="1"/>
</dbReference>
<dbReference type="PANTHER" id="PTHR30308">
    <property type="entry name" value="TMRNA-BINDING COMPONENT OF TRANS-TRANSLATION TAGGING COMPLEX"/>
    <property type="match status" value="1"/>
</dbReference>
<dbReference type="Pfam" id="PF01668">
    <property type="entry name" value="SmpB"/>
    <property type="match status" value="1"/>
</dbReference>
<dbReference type="SUPFAM" id="SSF74982">
    <property type="entry name" value="Small protein B (SmpB)"/>
    <property type="match status" value="1"/>
</dbReference>
<dbReference type="PROSITE" id="PS01317">
    <property type="entry name" value="SSRP"/>
    <property type="match status" value="1"/>
</dbReference>
<accession>Q83C29</accession>
<protein>
    <recommendedName>
        <fullName evidence="1">SsrA-binding protein</fullName>
    </recommendedName>
    <alternativeName>
        <fullName evidence="1">Small protein B</fullName>
    </alternativeName>
</protein>
<sequence length="159" mass="18457">MNKQISKKPAQRTIALNKKALHDYYVEQRFEAGLVLEGWEVKSIRAGRVQLRDSYVVFKGGEAWLIGAHLSPLPNVAEYMKADPQRSRKLLLNKREIGKLFGAVQKQGLTVVPLDLHWHKNHVKVEIVLAKGKKTHDKRETIKRREWEREKHRVLKSHG</sequence>
<reference key="1">
    <citation type="journal article" date="2003" name="Proc. Natl. Acad. Sci. U.S.A.">
        <title>Complete genome sequence of the Q-fever pathogen, Coxiella burnetii.</title>
        <authorList>
            <person name="Seshadri R."/>
            <person name="Paulsen I.T."/>
            <person name="Eisen J.A."/>
            <person name="Read T.D."/>
            <person name="Nelson K.E."/>
            <person name="Nelson W.C."/>
            <person name="Ward N.L."/>
            <person name="Tettelin H."/>
            <person name="Davidsen T.M."/>
            <person name="Beanan M.J."/>
            <person name="DeBoy R.T."/>
            <person name="Daugherty S.C."/>
            <person name="Brinkac L.M."/>
            <person name="Madupu R."/>
            <person name="Dodson R.J."/>
            <person name="Khouri H.M."/>
            <person name="Lee K.H."/>
            <person name="Carty H.A."/>
            <person name="Scanlan D."/>
            <person name="Heinzen R.A."/>
            <person name="Thompson H.A."/>
            <person name="Samuel J.E."/>
            <person name="Fraser C.M."/>
            <person name="Heidelberg J.F."/>
        </authorList>
    </citation>
    <scope>NUCLEOTIDE SEQUENCE [LARGE SCALE GENOMIC DNA]</scope>
    <source>
        <strain>RSA 493 / Nine Mile phase I</strain>
    </source>
</reference>